<sequence length="363" mass="38296">MKLKLILAVAMLAFSLPSQAERIKDIANVQGVRSNQLIGYGLVVGLPGTGEKTRYTEQTFTTMLKNFGINLPDNFRPKIKNVAVVAVHADMPAFIKPGQELDVTVSSLGEAKSLRGGTLLQTFLKGVDGNVYAIAQGSLVVSGFSADGLDGSKVIQNTPTVGRIPNGAIVERSVATPFSTGDYLTFNLRRSDFSTAQRMADAINDLLGPDMARPLDATSVQVSAPRDVSQRVSFLATLENIEVEPADESAKVIVNSRTGTIVVGQNVKLLPAAVTHGGLTVTIAEATQVSQPNALANGQTTVTSNSTINASESNRRMFMFNPGTTLDELVRAVNLVGAAPSDVLAILEALKVAGALHGELIII</sequence>
<organism>
    <name type="scientific">Shewanella sp. (strain MR-4)</name>
    <dbReference type="NCBI Taxonomy" id="60480"/>
    <lineage>
        <taxon>Bacteria</taxon>
        <taxon>Pseudomonadati</taxon>
        <taxon>Pseudomonadota</taxon>
        <taxon>Gammaproteobacteria</taxon>
        <taxon>Alteromonadales</taxon>
        <taxon>Shewanellaceae</taxon>
        <taxon>Shewanella</taxon>
    </lineage>
</organism>
<reference key="1">
    <citation type="submission" date="2006-08" db="EMBL/GenBank/DDBJ databases">
        <title>Complete sequence of Shewanella sp. MR-4.</title>
        <authorList>
            <consortium name="US DOE Joint Genome Institute"/>
            <person name="Copeland A."/>
            <person name="Lucas S."/>
            <person name="Lapidus A."/>
            <person name="Barry K."/>
            <person name="Detter J.C."/>
            <person name="Glavina del Rio T."/>
            <person name="Hammon N."/>
            <person name="Israni S."/>
            <person name="Dalin E."/>
            <person name="Tice H."/>
            <person name="Pitluck S."/>
            <person name="Kiss H."/>
            <person name="Brettin T."/>
            <person name="Bruce D."/>
            <person name="Han C."/>
            <person name="Tapia R."/>
            <person name="Gilna P."/>
            <person name="Schmutz J."/>
            <person name="Larimer F."/>
            <person name="Land M."/>
            <person name="Hauser L."/>
            <person name="Kyrpides N."/>
            <person name="Mikhailova N."/>
            <person name="Nealson K."/>
            <person name="Konstantinidis K."/>
            <person name="Klappenbach J."/>
            <person name="Tiedje J."/>
            <person name="Richardson P."/>
        </authorList>
    </citation>
    <scope>NUCLEOTIDE SEQUENCE [LARGE SCALE GENOMIC DNA]</scope>
    <source>
        <strain>MR-4</strain>
    </source>
</reference>
<dbReference type="EMBL" id="CP000446">
    <property type="protein sequence ID" value="ABI38346.1"/>
    <property type="molecule type" value="Genomic_DNA"/>
</dbReference>
<dbReference type="RefSeq" id="WP_011622054.1">
    <property type="nucleotide sequence ID" value="NC_008321.1"/>
</dbReference>
<dbReference type="SMR" id="Q0HKS1"/>
<dbReference type="KEGG" id="she:Shewmr4_1266"/>
<dbReference type="HOGENOM" id="CLU_045235_1_0_6"/>
<dbReference type="GO" id="GO:0009428">
    <property type="term" value="C:bacterial-type flagellum basal body, distal rod, P ring"/>
    <property type="evidence" value="ECO:0007669"/>
    <property type="project" value="InterPro"/>
</dbReference>
<dbReference type="GO" id="GO:0030288">
    <property type="term" value="C:outer membrane-bounded periplasmic space"/>
    <property type="evidence" value="ECO:0007669"/>
    <property type="project" value="InterPro"/>
</dbReference>
<dbReference type="GO" id="GO:0005198">
    <property type="term" value="F:structural molecule activity"/>
    <property type="evidence" value="ECO:0007669"/>
    <property type="project" value="InterPro"/>
</dbReference>
<dbReference type="GO" id="GO:0071973">
    <property type="term" value="P:bacterial-type flagellum-dependent cell motility"/>
    <property type="evidence" value="ECO:0007669"/>
    <property type="project" value="InterPro"/>
</dbReference>
<dbReference type="HAMAP" id="MF_00416">
    <property type="entry name" value="FlgI"/>
    <property type="match status" value="1"/>
</dbReference>
<dbReference type="InterPro" id="IPR001782">
    <property type="entry name" value="Flag_FlgI"/>
</dbReference>
<dbReference type="NCBIfam" id="NF003676">
    <property type="entry name" value="PRK05303.1"/>
    <property type="match status" value="1"/>
</dbReference>
<dbReference type="PANTHER" id="PTHR30381">
    <property type="entry name" value="FLAGELLAR P-RING PERIPLASMIC PROTEIN FLGI"/>
    <property type="match status" value="1"/>
</dbReference>
<dbReference type="PANTHER" id="PTHR30381:SF0">
    <property type="entry name" value="FLAGELLAR P-RING PROTEIN"/>
    <property type="match status" value="1"/>
</dbReference>
<dbReference type="Pfam" id="PF02119">
    <property type="entry name" value="FlgI"/>
    <property type="match status" value="1"/>
</dbReference>
<dbReference type="PRINTS" id="PR01010">
    <property type="entry name" value="FLGPRINGFLGI"/>
</dbReference>
<protein>
    <recommendedName>
        <fullName evidence="1">Flagellar P-ring protein</fullName>
    </recommendedName>
    <alternativeName>
        <fullName evidence="1">Basal body P-ring protein</fullName>
    </alternativeName>
</protein>
<proteinExistence type="inferred from homology"/>
<accession>Q0HKS1</accession>
<comment type="function">
    <text evidence="1">Assembles around the rod to form the L-ring and probably protects the motor/basal body from shearing forces during rotation.</text>
</comment>
<comment type="subunit">
    <text evidence="1">The basal body constitutes a major portion of the flagellar organelle and consists of four rings (L,P,S, and M) mounted on a central rod.</text>
</comment>
<comment type="subcellular location">
    <subcellularLocation>
        <location evidence="1">Periplasm</location>
    </subcellularLocation>
    <subcellularLocation>
        <location evidence="1">Bacterial flagellum basal body</location>
    </subcellularLocation>
</comment>
<comment type="similarity">
    <text evidence="1">Belongs to the FlgI family.</text>
</comment>
<gene>
    <name evidence="1" type="primary">flgI</name>
    <name type="ordered locus">Shewmr4_1266</name>
</gene>
<evidence type="ECO:0000255" key="1">
    <source>
        <dbReference type="HAMAP-Rule" id="MF_00416"/>
    </source>
</evidence>
<name>FLGI_SHESM</name>
<keyword id="KW-0975">Bacterial flagellum</keyword>
<keyword id="KW-0574">Periplasm</keyword>
<keyword id="KW-0732">Signal</keyword>
<feature type="signal peptide" evidence="1">
    <location>
        <begin position="1"/>
        <end position="20"/>
    </location>
</feature>
<feature type="chain" id="PRO_5000129706" description="Flagellar P-ring protein">
    <location>
        <begin position="21"/>
        <end position="363"/>
    </location>
</feature>